<dbReference type="EMBL" id="BA000023">
    <property type="protein sequence ID" value="BAB66480.1"/>
    <property type="molecule type" value="Genomic_DNA"/>
</dbReference>
<dbReference type="RefSeq" id="WP_010979458.1">
    <property type="nucleotide sequence ID" value="NC_003106.2"/>
</dbReference>
<dbReference type="SMR" id="Q971E0"/>
<dbReference type="STRING" id="273063.STK_14130"/>
<dbReference type="KEGG" id="sto:STK_14130"/>
<dbReference type="PATRIC" id="fig|273063.9.peg.1613"/>
<dbReference type="eggNOG" id="arCOG00215">
    <property type="taxonomic scope" value="Archaea"/>
</dbReference>
<dbReference type="OrthoDB" id="372037at2157"/>
<dbReference type="Proteomes" id="UP000001015">
    <property type="component" value="Chromosome"/>
</dbReference>
<dbReference type="CDD" id="cd00885">
    <property type="entry name" value="cinA"/>
    <property type="match status" value="1"/>
</dbReference>
<dbReference type="Gene3D" id="3.40.980.10">
    <property type="entry name" value="MoaB/Mog-like domain"/>
    <property type="match status" value="1"/>
</dbReference>
<dbReference type="HAMAP" id="MF_00226_A">
    <property type="entry name" value="CinA_A"/>
    <property type="match status" value="1"/>
</dbReference>
<dbReference type="InterPro" id="IPR050101">
    <property type="entry name" value="CinA"/>
</dbReference>
<dbReference type="InterPro" id="IPR023055">
    <property type="entry name" value="CinA_Arc"/>
</dbReference>
<dbReference type="InterPro" id="IPR036425">
    <property type="entry name" value="MoaB/Mog-like_dom_sf"/>
</dbReference>
<dbReference type="InterPro" id="IPR001453">
    <property type="entry name" value="MoaB/Mog_dom"/>
</dbReference>
<dbReference type="NCBIfam" id="NF002291">
    <property type="entry name" value="PRK01215.1"/>
    <property type="match status" value="1"/>
</dbReference>
<dbReference type="PANTHER" id="PTHR13939">
    <property type="entry name" value="NICOTINAMIDE-NUCLEOTIDE AMIDOHYDROLASE PNCC"/>
    <property type="match status" value="1"/>
</dbReference>
<dbReference type="PANTHER" id="PTHR13939:SF0">
    <property type="entry name" value="NMN AMIDOHYDROLASE-LIKE PROTEIN YFAY"/>
    <property type="match status" value="1"/>
</dbReference>
<dbReference type="Pfam" id="PF00994">
    <property type="entry name" value="MoCF_biosynth"/>
    <property type="match status" value="1"/>
</dbReference>
<dbReference type="SMART" id="SM00852">
    <property type="entry name" value="MoCF_biosynth"/>
    <property type="match status" value="1"/>
</dbReference>
<dbReference type="SUPFAM" id="SSF53218">
    <property type="entry name" value="Molybdenum cofactor biosynthesis proteins"/>
    <property type="match status" value="1"/>
</dbReference>
<name>Y1413_SULTO</name>
<proteinExistence type="inferred from homology"/>
<comment type="similarity">
    <text evidence="1">Belongs to the CinA family.</text>
</comment>
<feature type="chain" id="PRO_0000336542" description="Protein STK_14130">
    <location>
        <begin position="1"/>
        <end position="263"/>
    </location>
</feature>
<keyword id="KW-1185">Reference proteome</keyword>
<evidence type="ECO:0000255" key="1">
    <source>
        <dbReference type="HAMAP-Rule" id="MF_00226"/>
    </source>
</evidence>
<sequence>MEIWYAEIINIGNEILTGRTINTNASHIARRLTSLGYTVRRITVVRDEIEEIVSAFREAINRRPRIIISTGGLGPTYDDKTNEGLAKALNIELELNEIAYKMLLEKYSKLNIEITEERKKMAIMPKGSIPVENNAGVAPGILIVYQGITILATPGVPKEMEDVLENFIKKYLKDRPSVKYLETSFLLEGVMESTIAPYVKQLVKKYDLYIKTHPKGQELSKPILEIQIAGSSENEAEIKERIQKALEELKEIGVKLGGTIIQS</sequence>
<accession>Q971E0</accession>
<protein>
    <recommendedName>
        <fullName evidence="1">Protein STK_14130</fullName>
    </recommendedName>
</protein>
<organism>
    <name type="scientific">Sulfurisphaera tokodaii (strain DSM 16993 / JCM 10545 / NBRC 100140 / 7)</name>
    <name type="common">Sulfolobus tokodaii</name>
    <dbReference type="NCBI Taxonomy" id="273063"/>
    <lineage>
        <taxon>Archaea</taxon>
        <taxon>Thermoproteota</taxon>
        <taxon>Thermoprotei</taxon>
        <taxon>Sulfolobales</taxon>
        <taxon>Sulfolobaceae</taxon>
        <taxon>Sulfurisphaera</taxon>
    </lineage>
</organism>
<gene>
    <name type="ordered locus">STK_14130</name>
</gene>
<reference key="1">
    <citation type="journal article" date="2001" name="DNA Res.">
        <title>Complete genome sequence of an aerobic thermoacidophilic Crenarchaeon, Sulfolobus tokodaii strain7.</title>
        <authorList>
            <person name="Kawarabayasi Y."/>
            <person name="Hino Y."/>
            <person name="Horikawa H."/>
            <person name="Jin-no K."/>
            <person name="Takahashi M."/>
            <person name="Sekine M."/>
            <person name="Baba S."/>
            <person name="Ankai A."/>
            <person name="Kosugi H."/>
            <person name="Hosoyama A."/>
            <person name="Fukui S."/>
            <person name="Nagai Y."/>
            <person name="Nishijima K."/>
            <person name="Otsuka R."/>
            <person name="Nakazawa H."/>
            <person name="Takamiya M."/>
            <person name="Kato Y."/>
            <person name="Yoshizawa T."/>
            <person name="Tanaka T."/>
            <person name="Kudoh Y."/>
            <person name="Yamazaki J."/>
            <person name="Kushida N."/>
            <person name="Oguchi A."/>
            <person name="Aoki K."/>
            <person name="Masuda S."/>
            <person name="Yanagii M."/>
            <person name="Nishimura M."/>
            <person name="Yamagishi A."/>
            <person name="Oshima T."/>
            <person name="Kikuchi H."/>
        </authorList>
    </citation>
    <scope>NUCLEOTIDE SEQUENCE [LARGE SCALE GENOMIC DNA]</scope>
    <source>
        <strain>DSM 16993 / JCM 10545 / NBRC 100140 / 7</strain>
    </source>
</reference>